<reference key="1">
    <citation type="journal article" date="2004" name="Genome Res.">
        <title>The status, quality, and expansion of the NIH full-length cDNA project: the Mammalian Gene Collection (MGC).</title>
        <authorList>
            <consortium name="The MGC Project Team"/>
        </authorList>
    </citation>
    <scope>NUCLEOTIDE SEQUENCE [LARGE SCALE MRNA]</scope>
    <source>
        <tissue>Prostate</tissue>
    </source>
</reference>
<comment type="function">
    <text evidence="1">May play a role in intracellular membrane fusion.</text>
</comment>
<comment type="subunit">
    <text evidence="1">Associates with the BLOC-1 complex. Interacts with BLOC1S6. Forms a complex containing SNAP47, VAMP2 and STX1A (By similarity).</text>
</comment>
<comment type="subcellular location">
    <subcellularLocation>
        <location evidence="1">Endomembrane system</location>
    </subcellularLocation>
    <subcellularLocation>
        <location evidence="1">Cytoplasm</location>
        <location evidence="1">Perinuclear region</location>
    </subcellularLocation>
    <text evidence="1">Appears to be exclusively membrane-bound.</text>
</comment>
<comment type="similarity">
    <text evidence="3">Belongs to the SVAP1 family.</text>
</comment>
<feature type="chain" id="PRO_0000307153" description="Synaptosomal-associated protein 47">
    <location>
        <begin position="1"/>
        <end position="419"/>
    </location>
</feature>
<feature type="domain" description="t-SNARE coiled-coil homology 1" evidence="2">
    <location>
        <begin position="109"/>
        <end position="171"/>
    </location>
</feature>
<feature type="domain" description="t-SNARE coiled-coil homology 2" evidence="2">
    <location>
        <begin position="356"/>
        <end position="418"/>
    </location>
</feature>
<organism>
    <name type="scientific">Rattus norvegicus</name>
    <name type="common">Rat</name>
    <dbReference type="NCBI Taxonomy" id="10116"/>
    <lineage>
        <taxon>Eukaryota</taxon>
        <taxon>Metazoa</taxon>
        <taxon>Chordata</taxon>
        <taxon>Craniata</taxon>
        <taxon>Vertebrata</taxon>
        <taxon>Euteleostomi</taxon>
        <taxon>Mammalia</taxon>
        <taxon>Eutheria</taxon>
        <taxon>Euarchontoglires</taxon>
        <taxon>Glires</taxon>
        <taxon>Rodentia</taxon>
        <taxon>Myomorpha</taxon>
        <taxon>Muroidea</taxon>
        <taxon>Muridae</taxon>
        <taxon>Murinae</taxon>
        <taxon>Rattus</taxon>
    </lineage>
</organism>
<accession>Q6P6S0</accession>
<keyword id="KW-0175">Coiled coil</keyword>
<keyword id="KW-0963">Cytoplasm</keyword>
<keyword id="KW-0472">Membrane</keyword>
<keyword id="KW-1185">Reference proteome</keyword>
<keyword id="KW-0677">Repeat</keyword>
<protein>
    <recommendedName>
        <fullName>Synaptosomal-associated protein 47</fullName>
        <shortName>SNAP-47</shortName>
    </recommendedName>
    <alternativeName>
        <fullName>Synaptosomal-associated 47 kDa protein</fullName>
    </alternativeName>
</protein>
<name>SNP47_RAT</name>
<evidence type="ECO:0000250" key="1"/>
<evidence type="ECO:0000255" key="2">
    <source>
        <dbReference type="PROSITE-ProRule" id="PRU00202"/>
    </source>
</evidence>
<evidence type="ECO:0000305" key="3"/>
<gene>
    <name type="primary">Snap47</name>
</gene>
<proteinExistence type="evidence at transcript level"/>
<dbReference type="EMBL" id="BC062056">
    <property type="protein sequence ID" value="AAH62056.1"/>
    <property type="molecule type" value="mRNA"/>
</dbReference>
<dbReference type="RefSeq" id="NP_955421.1">
    <property type="nucleotide sequence ID" value="NM_199389.1"/>
</dbReference>
<dbReference type="RefSeq" id="XP_006246550.1">
    <property type="nucleotide sequence ID" value="XM_006246488.5"/>
</dbReference>
<dbReference type="SMR" id="Q6P6S0"/>
<dbReference type="CORUM" id="Q6P6S0"/>
<dbReference type="FunCoup" id="Q6P6S0">
    <property type="interactions" value="2308"/>
</dbReference>
<dbReference type="STRING" id="10116.ENSRNOP00000029215"/>
<dbReference type="iPTMnet" id="Q6P6S0"/>
<dbReference type="PhosphoSitePlus" id="Q6P6S0"/>
<dbReference type="PaxDb" id="10116-ENSRNOP00000029215"/>
<dbReference type="Ensembl" id="ENSRNOT00000119360.1">
    <property type="protein sequence ID" value="ENSRNOP00000076626.1"/>
    <property type="gene ID" value="ENSRNOG00000022472.5"/>
</dbReference>
<dbReference type="GeneID" id="303183"/>
<dbReference type="KEGG" id="rno:303183"/>
<dbReference type="UCSC" id="RGD:735194">
    <property type="organism name" value="rat"/>
</dbReference>
<dbReference type="AGR" id="RGD:735194"/>
<dbReference type="CTD" id="116841"/>
<dbReference type="RGD" id="735194">
    <property type="gene designation" value="Snap47"/>
</dbReference>
<dbReference type="eggNOG" id="KOG3065">
    <property type="taxonomic scope" value="Eukaryota"/>
</dbReference>
<dbReference type="GeneTree" id="ENSGT00950000182843"/>
<dbReference type="HOGENOM" id="CLU_029855_0_0_1"/>
<dbReference type="InParanoid" id="Q6P6S0"/>
<dbReference type="OMA" id="DICIHTW"/>
<dbReference type="OrthoDB" id="59032at9989"/>
<dbReference type="PhylomeDB" id="Q6P6S0"/>
<dbReference type="TreeFam" id="TF331066"/>
<dbReference type="PRO" id="PR:Q6P6S0"/>
<dbReference type="Proteomes" id="UP000002494">
    <property type="component" value="Chromosome 10"/>
</dbReference>
<dbReference type="Bgee" id="ENSRNOG00000022472">
    <property type="expression patterns" value="Expressed in skeletal muscle tissue and 18 other cell types or tissues"/>
</dbReference>
<dbReference type="GO" id="GO:0032279">
    <property type="term" value="C:asymmetric synapse"/>
    <property type="evidence" value="ECO:0000314"/>
    <property type="project" value="SynGO"/>
</dbReference>
<dbReference type="GO" id="GO:0031083">
    <property type="term" value="C:BLOC-1 complex"/>
    <property type="evidence" value="ECO:0000266"/>
    <property type="project" value="RGD"/>
</dbReference>
<dbReference type="GO" id="GO:0030425">
    <property type="term" value="C:dendrite"/>
    <property type="evidence" value="ECO:0000266"/>
    <property type="project" value="RGD"/>
</dbReference>
<dbReference type="GO" id="GO:0012505">
    <property type="term" value="C:endomembrane system"/>
    <property type="evidence" value="ECO:0007669"/>
    <property type="project" value="UniProtKB-SubCell"/>
</dbReference>
<dbReference type="GO" id="GO:0098978">
    <property type="term" value="C:glutamatergic synapse"/>
    <property type="evidence" value="ECO:0000266"/>
    <property type="project" value="RGD"/>
</dbReference>
<dbReference type="GO" id="GO:0098686">
    <property type="term" value="C:hippocampal mossy fiber to CA3 synapse"/>
    <property type="evidence" value="ECO:0000314"/>
    <property type="project" value="SynGO"/>
</dbReference>
<dbReference type="GO" id="GO:0016020">
    <property type="term" value="C:membrane"/>
    <property type="evidence" value="ECO:0000266"/>
    <property type="project" value="RGD"/>
</dbReference>
<dbReference type="GO" id="GO:0043025">
    <property type="term" value="C:neuronal cell body"/>
    <property type="evidence" value="ECO:0000266"/>
    <property type="project" value="RGD"/>
</dbReference>
<dbReference type="GO" id="GO:0048471">
    <property type="term" value="C:perinuclear region of cytoplasm"/>
    <property type="evidence" value="ECO:0007669"/>
    <property type="project" value="UniProtKB-SubCell"/>
</dbReference>
<dbReference type="GO" id="GO:0005886">
    <property type="term" value="C:plasma membrane"/>
    <property type="evidence" value="ECO:0000318"/>
    <property type="project" value="GO_Central"/>
</dbReference>
<dbReference type="GO" id="GO:0014069">
    <property type="term" value="C:postsynaptic density"/>
    <property type="evidence" value="ECO:0000314"/>
    <property type="project" value="SynGO"/>
</dbReference>
<dbReference type="GO" id="GO:0048786">
    <property type="term" value="C:presynaptic active zone"/>
    <property type="evidence" value="ECO:0000314"/>
    <property type="project" value="SynGO"/>
</dbReference>
<dbReference type="GO" id="GO:0031201">
    <property type="term" value="C:SNARE complex"/>
    <property type="evidence" value="ECO:0000318"/>
    <property type="project" value="GO_Central"/>
</dbReference>
<dbReference type="GO" id="GO:0005484">
    <property type="term" value="F:SNAP receptor activity"/>
    <property type="evidence" value="ECO:0000318"/>
    <property type="project" value="GO_Central"/>
</dbReference>
<dbReference type="GO" id="GO:0019905">
    <property type="term" value="F:syntaxin binding"/>
    <property type="evidence" value="ECO:0000318"/>
    <property type="project" value="GO_Central"/>
</dbReference>
<dbReference type="GO" id="GO:0098967">
    <property type="term" value="P:exocytic insertion of neurotransmitter receptor to postsynaptic membrane"/>
    <property type="evidence" value="ECO:0000266"/>
    <property type="project" value="RGD"/>
</dbReference>
<dbReference type="GO" id="GO:0006887">
    <property type="term" value="P:exocytosis"/>
    <property type="evidence" value="ECO:0000318"/>
    <property type="project" value="GO_Central"/>
</dbReference>
<dbReference type="GO" id="GO:0060291">
    <property type="term" value="P:long-term synaptic potentiation"/>
    <property type="evidence" value="ECO:0000266"/>
    <property type="project" value="RGD"/>
</dbReference>
<dbReference type="GO" id="GO:0031629">
    <property type="term" value="P:synaptic vesicle fusion to presynaptic active zone membrane"/>
    <property type="evidence" value="ECO:0000318"/>
    <property type="project" value="GO_Central"/>
</dbReference>
<dbReference type="GO" id="GO:0016082">
    <property type="term" value="P:synaptic vesicle priming"/>
    <property type="evidence" value="ECO:0000318"/>
    <property type="project" value="GO_Central"/>
</dbReference>
<dbReference type="GO" id="GO:0099003">
    <property type="term" value="P:vesicle-mediated transport in synapse"/>
    <property type="evidence" value="ECO:0000266"/>
    <property type="project" value="RGD"/>
</dbReference>
<dbReference type="CDD" id="cd15854">
    <property type="entry name" value="SNARE_SNAP47C"/>
    <property type="match status" value="1"/>
</dbReference>
<dbReference type="CDD" id="cd15888">
    <property type="entry name" value="SNARE_SNAP47N"/>
    <property type="match status" value="1"/>
</dbReference>
<dbReference type="FunFam" id="2.30.29.30:FF:000269">
    <property type="entry name" value="Synaptosomal-associated protein 47"/>
    <property type="match status" value="1"/>
</dbReference>
<dbReference type="FunFam" id="1.20.5.110:FF:000052">
    <property type="entry name" value="synaptosomal-associated protein 47"/>
    <property type="match status" value="1"/>
</dbReference>
<dbReference type="FunFam" id="1.20.5.110:FF:000061">
    <property type="entry name" value="Synaptosome associated protein 47"/>
    <property type="match status" value="1"/>
</dbReference>
<dbReference type="Gene3D" id="1.20.5.110">
    <property type="match status" value="2"/>
</dbReference>
<dbReference type="Gene3D" id="2.30.29.30">
    <property type="entry name" value="Pleckstrin-homology domain (PH domain)/Phosphotyrosine-binding domain (PTB)"/>
    <property type="match status" value="1"/>
</dbReference>
<dbReference type="InterPro" id="IPR011993">
    <property type="entry name" value="PH-like_dom_sf"/>
</dbReference>
<dbReference type="InterPro" id="IPR000727">
    <property type="entry name" value="T_SNARE_dom"/>
</dbReference>
<dbReference type="PANTHER" id="PTHR19305">
    <property type="entry name" value="SYNAPTOSOMAL ASSOCIATED PROTEIN"/>
    <property type="match status" value="1"/>
</dbReference>
<dbReference type="PANTHER" id="PTHR19305:SF1">
    <property type="entry name" value="SYNAPTOSOMAL-ASSOCIATED PROTEIN 47"/>
    <property type="match status" value="1"/>
</dbReference>
<dbReference type="SUPFAM" id="SSF58038">
    <property type="entry name" value="SNARE fusion complex"/>
    <property type="match status" value="2"/>
</dbReference>
<dbReference type="PROSITE" id="PS50192">
    <property type="entry name" value="T_SNARE"/>
    <property type="match status" value="2"/>
</dbReference>
<sequence>MSSDVRVHTWPCSYYLDLEKQWLPGKLTLTPRSLKFSVDKAEEVLVGLPLSSITEIRKETSLFIFSAITVLEKGQAKHWFSSLRPSRNVVFNIIEHFWRELLLSQPGTAANPTSPMTRGQELMGLMASSQRRMEDTAKVLHHQGEQLDSVMRGLEKMESDLDVADRLLTELETPSWWPFSAKFWKTPVEAKPRDSVSVAPCEPFGKEGVVIRVPAVVSQRTESHSKPGKLTVLVSGLEIHDSSSLLLHRFEKEDVDDIKVHSPYEVSIRQRFIGKPDVAYRLISAKMPEVIPILEVQFSKKIELLEDALVLRSRGRASPAEGGCSIRHAASRLMGCTTHQELPTGGQEGQQSQLQKDWPLLSEGEAQELTQILSKLKGLALDTEAELERQDAALDGITVAVDRATLTVDKHNRRMRKLL</sequence>